<keyword id="KW-1015">Disulfide bond</keyword>
<keyword id="KW-0256">Endoplasmic reticulum</keyword>
<keyword id="KW-0325">Glycoprotein</keyword>
<keyword id="KW-0328">Glycosyltransferase</keyword>
<keyword id="KW-0333">Golgi apparatus</keyword>
<keyword id="KW-0464">Manganese</keyword>
<keyword id="KW-0472">Membrane</keyword>
<keyword id="KW-0479">Metal-binding</keyword>
<keyword id="KW-0735">Signal-anchor</keyword>
<keyword id="KW-0808">Transferase</keyword>
<keyword id="KW-0812">Transmembrane</keyword>
<keyword id="KW-1133">Transmembrane helix</keyword>
<organism>
    <name type="scientific">Cricetulus griseus</name>
    <name type="common">Chinese hamster</name>
    <name type="synonym">Cricetulus barabensis griseus</name>
    <dbReference type="NCBI Taxonomy" id="10029"/>
    <lineage>
        <taxon>Eukaryota</taxon>
        <taxon>Metazoa</taxon>
        <taxon>Chordata</taxon>
        <taxon>Craniata</taxon>
        <taxon>Vertebrata</taxon>
        <taxon>Euteleostomi</taxon>
        <taxon>Mammalia</taxon>
        <taxon>Eutheria</taxon>
        <taxon>Euarchontoglires</taxon>
        <taxon>Glires</taxon>
        <taxon>Rodentia</taxon>
        <taxon>Myomorpha</taxon>
        <taxon>Muroidea</taxon>
        <taxon>Cricetidae</taxon>
        <taxon>Cricetinae</taxon>
        <taxon>Cricetulus</taxon>
    </lineage>
</organism>
<protein>
    <recommendedName>
        <fullName evidence="5">Exostosin-1</fullName>
        <ecNumber evidence="1">2.4.1.225</ecNumber>
    </recommendedName>
    <alternativeName>
        <fullName evidence="4">Heparan sulfate copolymerase</fullName>
    </alternativeName>
    <alternativeName>
        <fullName evidence="1">N-acetylglucosaminyl-proteoglycan 4-beta-glucuronosyltransferase</fullName>
    </alternativeName>
</protein>
<sequence length="746" mass="86189">MQAKKRYFILLSAGSCLALLFYFGGVQFRASRSHSRREEHSGRNGLHQPSPDHFWPRFADALHPFFPWDQLENEDSGVHVSPRQKRDANSSVYKGKKCRMESCFDFALCKKNGFKVYVYPQQKGEKIAESYQNILAAIEGSRFYTSDPSQACLFVLSLDTLDRDQLSPQYVHNLRSKVQSLHLWNNGRNHLIFNLYSGTWPDYTEDVGFDIGQAMLAKASISTENFRPNFDVSIPLFSKDHPRTGGERGFLKFNTIPPLRKYMLVFKGKRYLTGIGSDTRNALYHVHNGEDVLLLTTCKHGKDWQKHKDSRCDRDNTEYEKYDYREMLHNATFCLVPRGRRLGSFRFLEALQAACVPVMLSNGWELPFSEVINWNQAAVIGDERLLLQIPSTIRSIHQDKILALRQQTQFLWEAYFSSVEKIVLTTLEIIQDRIFKHISRNSLIWNKHPGGLFVLPQYSSYLGDFPYYYANLGLKPPSKFTAVIHAVTPLVSQSQPVLKLLVAAAKSQYCAQIIVLWNCDKPLPAKHRWPATAVPVIVIEGESKVMSSRFLPYDNIITDAVLSLDEDTVLSTTEVDFAFTVWQSFPERIVGYPARSHFWDNSKERWGYTSKWTNDYSMVLTGAAIYHKYYHYLYTHYLPASLKNMVDQLANCEDILMNFLVSAVTKLPPIKVTQKKQYKETMMGQTSRASRWADPDHFAQRQSCMNTFASWFGYMPLIHSQMRLDPVLFKDQVSILRKKYRDIERL</sequence>
<feature type="chain" id="PRO_0000149647" description="Exostosin-1">
    <location>
        <begin position="1"/>
        <end position="746"/>
    </location>
</feature>
<feature type="topological domain" description="Cytoplasmic" evidence="2">
    <location>
        <begin position="1"/>
        <end position="5"/>
    </location>
</feature>
<feature type="transmembrane region" description="Helical; Signal-anchor for type II membrane protein" evidence="2">
    <location>
        <begin position="6"/>
        <end position="26"/>
    </location>
</feature>
<feature type="topological domain" description="Lumenal" evidence="2">
    <location>
        <begin position="27"/>
        <end position="746"/>
    </location>
</feature>
<feature type="binding site" evidence="1">
    <location>
        <position position="166"/>
    </location>
    <ligand>
        <name>a protein</name>
        <dbReference type="ChEBI" id="CHEBI:16541"/>
    </ligand>
    <ligandPart>
        <name>O(3)-(N-acetyl-alpha-D-glucosaminyl-poly[(1-&gt;4)-beta-D-glucuronosyl-(1-&gt;4)-N-acetyl-alpha-D-glucosaminyl]-(1-&gt;4)-beta-D-glucuronosyl-(1-&gt;3)-beta-D-galactosyl-(1-&gt;3)-beta-D-galactosyl-(1-&gt;4)-beta-D-xylosyl)-L-serine residue</name>
        <dbReference type="ChEBI" id="CHEBI:132416"/>
    </ligandPart>
</feature>
<feature type="binding site" evidence="1">
    <location>
        <position position="203"/>
    </location>
    <ligand>
        <name>a protein</name>
        <dbReference type="ChEBI" id="CHEBI:16541"/>
    </ligand>
    <ligandPart>
        <name>O(3)-(N-acetyl-alpha-D-glucosaminyl-poly[(1-&gt;4)-beta-D-glucuronosyl-(1-&gt;4)-N-acetyl-alpha-D-glucosaminyl]-(1-&gt;4)-beta-D-glucuronosyl-(1-&gt;3)-beta-D-galactosyl-(1-&gt;3)-beta-D-galactosyl-(1-&gt;4)-beta-D-xylosyl)-L-serine residue</name>
        <dbReference type="ChEBI" id="CHEBI:132416"/>
    </ligandPart>
</feature>
<feature type="binding site" evidence="1">
    <location>
        <position position="267"/>
    </location>
    <ligand>
        <name>UDP</name>
        <dbReference type="ChEBI" id="CHEBI:58223"/>
    </ligand>
</feature>
<feature type="binding site" evidence="1">
    <location>
        <position position="269"/>
    </location>
    <ligand>
        <name>UDP</name>
        <dbReference type="ChEBI" id="CHEBI:58223"/>
    </ligand>
</feature>
<feature type="binding site" evidence="1">
    <location>
        <position position="271"/>
    </location>
    <ligand>
        <name>UDP</name>
        <dbReference type="ChEBI" id="CHEBI:58223"/>
    </ligand>
</feature>
<feature type="binding site" evidence="1">
    <location>
        <position position="280"/>
    </location>
    <ligand>
        <name>UDP</name>
        <dbReference type="ChEBI" id="CHEBI:58223"/>
    </ligand>
</feature>
<feature type="binding site" evidence="1">
    <location>
        <position position="300"/>
    </location>
    <ligand>
        <name>a protein</name>
        <dbReference type="ChEBI" id="CHEBI:16541"/>
    </ligand>
    <ligandPart>
        <name>O(3)-(N-acetyl-alpha-D-glucosaminyl-poly[(1-&gt;4)-beta-D-glucuronosyl-(1-&gt;4)-N-acetyl-alpha-D-glucosaminyl]-(1-&gt;4)-beta-D-glucuronosyl-(1-&gt;3)-beta-D-galactosyl-(1-&gt;3)-beta-D-galactosyl-(1-&gt;4)-beta-D-xylosyl)-L-serine residue</name>
        <dbReference type="ChEBI" id="CHEBI:132416"/>
    </ligandPart>
</feature>
<feature type="binding site" evidence="1">
    <location>
        <position position="319"/>
    </location>
    <ligand>
        <name>UDP</name>
        <dbReference type="ChEBI" id="CHEBI:58223"/>
    </ligand>
</feature>
<feature type="binding site" evidence="1">
    <location>
        <position position="324"/>
    </location>
    <ligand>
        <name>UDP</name>
        <dbReference type="ChEBI" id="CHEBI:58223"/>
    </ligand>
</feature>
<feature type="binding site" evidence="1">
    <location>
        <position position="346"/>
    </location>
    <ligand>
        <name>UDP</name>
        <dbReference type="ChEBI" id="CHEBI:58223"/>
    </ligand>
</feature>
<feature type="binding site" evidence="1">
    <location>
        <position position="349"/>
    </location>
    <ligand>
        <name>UDP</name>
        <dbReference type="ChEBI" id="CHEBI:58223"/>
    </ligand>
</feature>
<feature type="glycosylation site" description="N-linked (GlcNAc...) asparagine" evidence="2">
    <location>
        <position position="89"/>
    </location>
</feature>
<feature type="glycosylation site" description="N-linked (GlcNAc...) asparagine" evidence="1">
    <location>
        <position position="330"/>
    </location>
</feature>
<feature type="disulfide bond" evidence="1">
    <location>
        <begin position="98"/>
        <end position="103"/>
    </location>
</feature>
<feature type="disulfide bond" evidence="1">
    <location>
        <begin position="109"/>
        <end position="152"/>
    </location>
</feature>
<feature type="disulfide bond" evidence="1">
    <location>
        <begin position="298"/>
        <end position="312"/>
    </location>
</feature>
<feature type="disulfide bond" evidence="1">
    <location>
        <begin position="334"/>
        <end position="355"/>
    </location>
</feature>
<feature type="disulfide bond" evidence="1">
    <location>
        <begin position="652"/>
        <end position="704"/>
    </location>
</feature>
<feature type="mutagenesis site" description="Reduced GlcA transferase activity." evidence="3">
    <original>G</original>
    <variation>E</variation>
    <location>
        <position position="268"/>
    </location>
</feature>
<feature type="mutagenesis site" description="Reduced GlcA transferase activity." evidence="3">
    <original>C</original>
    <variation>Y</variation>
    <location>
        <position position="298"/>
    </location>
</feature>
<feature type="mutagenesis site" description="Reduced GlcA transferase activity." evidence="3">
    <original>R</original>
    <variation>K</variation>
    <location>
        <position position="341"/>
    </location>
</feature>
<feature type="mutagenesis site" description="Reduced GlcA transferase activity." evidence="3">
    <original>S</original>
    <variation>F</variation>
    <location>
        <position position="344"/>
    </location>
</feature>
<feature type="mutagenesis site" description="Reduced GlcA transferase activity." evidence="3">
    <original>R</original>
    <variation>K</variation>
    <location>
        <position position="346"/>
    </location>
</feature>
<feature type="mutagenesis site" description="Reduced GlcA transferase activity." evidence="3">
    <original>E</original>
    <variation>K</variation>
    <location>
        <position position="349"/>
    </location>
</feature>
<dbReference type="EC" id="2.4.1.225" evidence="1"/>
<dbReference type="EMBL" id="AF252858">
    <property type="protein sequence ID" value="AAF71276.1"/>
    <property type="molecule type" value="mRNA"/>
</dbReference>
<dbReference type="RefSeq" id="NP_001233696.1">
    <property type="nucleotide sequence ID" value="NM_001246767.1"/>
</dbReference>
<dbReference type="SMR" id="Q9JK82"/>
<dbReference type="CAZy" id="GT47">
    <property type="family name" value="Glycosyltransferase Family 47"/>
</dbReference>
<dbReference type="CAZy" id="GT64">
    <property type="family name" value="Glycosyltransferase Family 64"/>
</dbReference>
<dbReference type="GlyCosmos" id="Q9JK82">
    <property type="glycosylation" value="2 sites, No reported glycans"/>
</dbReference>
<dbReference type="PaxDb" id="10029-NP_001233696.1"/>
<dbReference type="Ensembl" id="ENSCGRT00001021710.1">
    <property type="protein sequence ID" value="ENSCGRP00001017466.1"/>
    <property type="gene ID" value="ENSCGRG00001017502.1"/>
</dbReference>
<dbReference type="GeneID" id="100689334"/>
<dbReference type="KEGG" id="cge:100689334"/>
<dbReference type="CTD" id="2131"/>
<dbReference type="eggNOG" id="KOG1021">
    <property type="taxonomic scope" value="Eukaryota"/>
</dbReference>
<dbReference type="GeneTree" id="ENSGT00940000155321"/>
<dbReference type="OrthoDB" id="5954868at2759"/>
<dbReference type="UniPathway" id="UPA00378"/>
<dbReference type="Proteomes" id="UP000694386">
    <property type="component" value="Unplaced"/>
</dbReference>
<dbReference type="Proteomes" id="UP001108280">
    <property type="component" value="Chromosome 10"/>
</dbReference>
<dbReference type="GO" id="GO:1902494">
    <property type="term" value="C:catalytic complex"/>
    <property type="evidence" value="ECO:0000250"/>
    <property type="project" value="UniProtKB"/>
</dbReference>
<dbReference type="GO" id="GO:0005783">
    <property type="term" value="C:endoplasmic reticulum"/>
    <property type="evidence" value="ECO:0000250"/>
    <property type="project" value="UniProtKB"/>
</dbReference>
<dbReference type="GO" id="GO:0005789">
    <property type="term" value="C:endoplasmic reticulum membrane"/>
    <property type="evidence" value="ECO:0000250"/>
    <property type="project" value="UniProtKB"/>
</dbReference>
<dbReference type="GO" id="GO:0005794">
    <property type="term" value="C:Golgi apparatus"/>
    <property type="evidence" value="ECO:0000250"/>
    <property type="project" value="UniProtKB"/>
</dbReference>
<dbReference type="GO" id="GO:0000139">
    <property type="term" value="C:Golgi membrane"/>
    <property type="evidence" value="ECO:0007669"/>
    <property type="project" value="UniProtKB-SubCell"/>
</dbReference>
<dbReference type="GO" id="GO:0045202">
    <property type="term" value="C:synapse"/>
    <property type="evidence" value="ECO:0007669"/>
    <property type="project" value="GOC"/>
</dbReference>
<dbReference type="GO" id="GO:0050508">
    <property type="term" value="F:glucuronosyl-N-acetylglucosaminyl-proteoglycan 4-alpha-N-acetylglucosaminyltransferase activity"/>
    <property type="evidence" value="ECO:0000250"/>
    <property type="project" value="UniProtKB"/>
</dbReference>
<dbReference type="GO" id="GO:0046872">
    <property type="term" value="F:metal ion binding"/>
    <property type="evidence" value="ECO:0007669"/>
    <property type="project" value="UniProtKB-KW"/>
</dbReference>
<dbReference type="GO" id="GO:0050509">
    <property type="term" value="F:N-acetylglucosaminyl-proteoglycan 4-beta-glucuronosyltransferase activity"/>
    <property type="evidence" value="ECO:0000250"/>
    <property type="project" value="UniProtKB"/>
</dbReference>
<dbReference type="GO" id="GO:0046982">
    <property type="term" value="F:protein heterodimerization activity"/>
    <property type="evidence" value="ECO:0007669"/>
    <property type="project" value="Ensembl"/>
</dbReference>
<dbReference type="GO" id="GO:0042803">
    <property type="term" value="F:protein homodimerization activity"/>
    <property type="evidence" value="ECO:0007669"/>
    <property type="project" value="Ensembl"/>
</dbReference>
<dbReference type="GO" id="GO:0019882">
    <property type="term" value="P:antigen processing and presentation"/>
    <property type="evidence" value="ECO:0007669"/>
    <property type="project" value="Ensembl"/>
</dbReference>
<dbReference type="GO" id="GO:0007411">
    <property type="term" value="P:axon guidance"/>
    <property type="evidence" value="ECO:0007669"/>
    <property type="project" value="Ensembl"/>
</dbReference>
<dbReference type="GO" id="GO:0071711">
    <property type="term" value="P:basement membrane organization"/>
    <property type="evidence" value="ECO:0007669"/>
    <property type="project" value="Ensembl"/>
</dbReference>
<dbReference type="GO" id="GO:0001974">
    <property type="term" value="P:blood vessel remodeling"/>
    <property type="evidence" value="ECO:0007669"/>
    <property type="project" value="Ensembl"/>
</dbReference>
<dbReference type="GO" id="GO:0030509">
    <property type="term" value="P:BMP signaling pathway"/>
    <property type="evidence" value="ECO:0007669"/>
    <property type="project" value="Ensembl"/>
</dbReference>
<dbReference type="GO" id="GO:0045453">
    <property type="term" value="P:bone resorption"/>
    <property type="evidence" value="ECO:0007669"/>
    <property type="project" value="Ensembl"/>
</dbReference>
<dbReference type="GO" id="GO:0060070">
    <property type="term" value="P:canonical Wnt signaling pathway"/>
    <property type="evidence" value="ECO:0007669"/>
    <property type="project" value="Ensembl"/>
</dbReference>
<dbReference type="GO" id="GO:0060351">
    <property type="term" value="P:cartilage development involved in endochondral bone morphogenesis"/>
    <property type="evidence" value="ECO:0007669"/>
    <property type="project" value="Ensembl"/>
</dbReference>
<dbReference type="GO" id="GO:0033627">
    <property type="term" value="P:cell adhesion mediated by integrin"/>
    <property type="evidence" value="ECO:0007669"/>
    <property type="project" value="Ensembl"/>
</dbReference>
<dbReference type="GO" id="GO:0045165">
    <property type="term" value="P:cell fate commitment"/>
    <property type="evidence" value="ECO:0007669"/>
    <property type="project" value="Ensembl"/>
</dbReference>
<dbReference type="GO" id="GO:0098586">
    <property type="term" value="P:cellular response to virus"/>
    <property type="evidence" value="ECO:0007669"/>
    <property type="project" value="Ensembl"/>
</dbReference>
<dbReference type="GO" id="GO:0003415">
    <property type="term" value="P:chondrocyte hypertrophy"/>
    <property type="evidence" value="ECO:0007669"/>
    <property type="project" value="Ensembl"/>
</dbReference>
<dbReference type="GO" id="GO:0035988">
    <property type="term" value="P:chondrocyte proliferation"/>
    <property type="evidence" value="ECO:0007669"/>
    <property type="project" value="Ensembl"/>
</dbReference>
<dbReference type="GO" id="GO:0030199">
    <property type="term" value="P:collagen fibril organization"/>
    <property type="evidence" value="ECO:0007669"/>
    <property type="project" value="Ensembl"/>
</dbReference>
<dbReference type="GO" id="GO:1904888">
    <property type="term" value="P:cranial skeletal system development"/>
    <property type="evidence" value="ECO:0007669"/>
    <property type="project" value="Ensembl"/>
</dbReference>
<dbReference type="GO" id="GO:0070593">
    <property type="term" value="P:dendrite self-avoidance"/>
    <property type="evidence" value="ECO:0007669"/>
    <property type="project" value="Ensembl"/>
</dbReference>
<dbReference type="GO" id="GO:0036336">
    <property type="term" value="P:dendritic cell migration"/>
    <property type="evidence" value="ECO:0007669"/>
    <property type="project" value="Ensembl"/>
</dbReference>
<dbReference type="GO" id="GO:0060560">
    <property type="term" value="P:developmental growth involved in morphogenesis"/>
    <property type="evidence" value="ECO:0007669"/>
    <property type="project" value="Ensembl"/>
</dbReference>
<dbReference type="GO" id="GO:0072498">
    <property type="term" value="P:embryonic skeletal joint development"/>
    <property type="evidence" value="ECO:0007669"/>
    <property type="project" value="Ensembl"/>
</dbReference>
<dbReference type="GO" id="GO:0003416">
    <property type="term" value="P:endochondral bone growth"/>
    <property type="evidence" value="ECO:0007669"/>
    <property type="project" value="Ensembl"/>
</dbReference>
<dbReference type="GO" id="GO:0001958">
    <property type="term" value="P:endochondral ossification"/>
    <property type="evidence" value="ECO:0007669"/>
    <property type="project" value="Ensembl"/>
</dbReference>
<dbReference type="GO" id="GO:0007492">
    <property type="term" value="P:endoderm development"/>
    <property type="evidence" value="ECO:0007669"/>
    <property type="project" value="Ensembl"/>
</dbReference>
<dbReference type="GO" id="GO:0060441">
    <property type="term" value="P:epithelial tube branching involved in lung morphogenesis"/>
    <property type="evidence" value="ECO:0007669"/>
    <property type="project" value="Ensembl"/>
</dbReference>
<dbReference type="GO" id="GO:0042596">
    <property type="term" value="P:fear response"/>
    <property type="evidence" value="ECO:0007669"/>
    <property type="project" value="Ensembl"/>
</dbReference>
<dbReference type="GO" id="GO:0008543">
    <property type="term" value="P:fibroblast growth factor receptor signaling pathway"/>
    <property type="evidence" value="ECO:0007669"/>
    <property type="project" value="Ensembl"/>
</dbReference>
<dbReference type="GO" id="GO:0042044">
    <property type="term" value="P:fluid transport"/>
    <property type="evidence" value="ECO:0007669"/>
    <property type="project" value="Ensembl"/>
</dbReference>
<dbReference type="GO" id="GO:0007369">
    <property type="term" value="P:gastrulation"/>
    <property type="evidence" value="ECO:0007669"/>
    <property type="project" value="Ensembl"/>
</dbReference>
<dbReference type="GO" id="GO:0010467">
    <property type="term" value="P:gene expression"/>
    <property type="evidence" value="ECO:0007669"/>
    <property type="project" value="Ensembl"/>
</dbReference>
<dbReference type="GO" id="GO:0002067">
    <property type="term" value="P:glandular epithelial cell differentiation"/>
    <property type="evidence" value="ECO:0007669"/>
    <property type="project" value="Ensembl"/>
</dbReference>
<dbReference type="GO" id="GO:0032836">
    <property type="term" value="P:glomerular basement membrane development"/>
    <property type="evidence" value="ECO:0007669"/>
    <property type="project" value="Ensembl"/>
</dbReference>
<dbReference type="GO" id="GO:0006024">
    <property type="term" value="P:glycosaminoglycan biosynthetic process"/>
    <property type="evidence" value="ECO:0007669"/>
    <property type="project" value="Ensembl"/>
</dbReference>
<dbReference type="GO" id="GO:0031069">
    <property type="term" value="P:hair follicle morphogenesis"/>
    <property type="evidence" value="ECO:0007669"/>
    <property type="project" value="Ensembl"/>
</dbReference>
<dbReference type="GO" id="GO:0060047">
    <property type="term" value="P:heart contraction"/>
    <property type="evidence" value="ECO:0007669"/>
    <property type="project" value="Ensembl"/>
</dbReference>
<dbReference type="GO" id="GO:0003128">
    <property type="term" value="P:heart field specification"/>
    <property type="evidence" value="ECO:0007669"/>
    <property type="project" value="Ensembl"/>
</dbReference>
<dbReference type="GO" id="GO:0060218">
    <property type="term" value="P:hematopoietic stem cell differentiation"/>
    <property type="evidence" value="ECO:0007669"/>
    <property type="project" value="Ensembl"/>
</dbReference>
<dbReference type="GO" id="GO:0061484">
    <property type="term" value="P:hematopoietic stem cell homeostasis"/>
    <property type="evidence" value="ECO:0007669"/>
    <property type="project" value="Ensembl"/>
</dbReference>
<dbReference type="GO" id="GO:0097241">
    <property type="term" value="P:hematopoietic stem cell migration to bone marrow"/>
    <property type="evidence" value="ECO:0007669"/>
    <property type="project" value="Ensembl"/>
</dbReference>
<dbReference type="GO" id="GO:0015012">
    <property type="term" value="P:heparan sulfate proteoglycan biosynthetic process"/>
    <property type="evidence" value="ECO:0000250"/>
    <property type="project" value="UniProtKB"/>
</dbReference>
<dbReference type="GO" id="GO:0030210">
    <property type="term" value="P:heparin proteoglycan biosynthetic process"/>
    <property type="evidence" value="ECO:0007669"/>
    <property type="project" value="Ensembl"/>
</dbReference>
<dbReference type="GO" id="GO:0002524">
    <property type="term" value="P:hypersensitivity"/>
    <property type="evidence" value="ECO:0007669"/>
    <property type="project" value="Ensembl"/>
</dbReference>
<dbReference type="GO" id="GO:0050901">
    <property type="term" value="P:leukocyte tethering or rolling"/>
    <property type="evidence" value="ECO:0007669"/>
    <property type="project" value="Ensembl"/>
</dbReference>
<dbReference type="GO" id="GO:0036022">
    <property type="term" value="P:limb joint morphogenesis"/>
    <property type="evidence" value="ECO:0007669"/>
    <property type="project" value="Ensembl"/>
</dbReference>
<dbReference type="GO" id="GO:0036339">
    <property type="term" value="P:lymphocyte adhesion to endothelial cell of high endothelial venule"/>
    <property type="evidence" value="ECO:0007669"/>
    <property type="project" value="Ensembl"/>
</dbReference>
<dbReference type="GO" id="GO:0097021">
    <property type="term" value="P:lymphocyte migration into lymphoid organs"/>
    <property type="evidence" value="ECO:0007669"/>
    <property type="project" value="Ensembl"/>
</dbReference>
<dbReference type="GO" id="GO:1901706">
    <property type="term" value="P:mesenchymal cell differentiation involved in bone development"/>
    <property type="evidence" value="ECO:0007669"/>
    <property type="project" value="Ensembl"/>
</dbReference>
<dbReference type="GO" id="GO:0007498">
    <property type="term" value="P:mesoderm development"/>
    <property type="evidence" value="ECO:0007669"/>
    <property type="project" value="Ensembl"/>
</dbReference>
<dbReference type="GO" id="GO:0061744">
    <property type="term" value="P:motor behavior"/>
    <property type="evidence" value="ECO:0007669"/>
    <property type="project" value="Ensembl"/>
</dbReference>
<dbReference type="GO" id="GO:0035264">
    <property type="term" value="P:multicellular organism growth"/>
    <property type="evidence" value="ECO:0007669"/>
    <property type="project" value="Ensembl"/>
</dbReference>
<dbReference type="GO" id="GO:0050891">
    <property type="term" value="P:multicellular organismal-level water homeostasis"/>
    <property type="evidence" value="ECO:0007669"/>
    <property type="project" value="Ensembl"/>
</dbReference>
<dbReference type="GO" id="GO:0014033">
    <property type="term" value="P:neural crest cell differentiation"/>
    <property type="evidence" value="ECO:0007669"/>
    <property type="project" value="Ensembl"/>
</dbReference>
<dbReference type="GO" id="GO:0021772">
    <property type="term" value="P:olfactory bulb development"/>
    <property type="evidence" value="ECO:0007669"/>
    <property type="project" value="Ensembl"/>
</dbReference>
<dbReference type="GO" id="GO:0021554">
    <property type="term" value="P:optic nerve development"/>
    <property type="evidence" value="ECO:0007669"/>
    <property type="project" value="Ensembl"/>
</dbReference>
<dbReference type="GO" id="GO:0043931">
    <property type="term" value="P:ossification involved in bone maturation"/>
    <property type="evidence" value="ECO:0007669"/>
    <property type="project" value="Ensembl"/>
</dbReference>
<dbReference type="GO" id="GO:0061974">
    <property type="term" value="P:perichondral bone morphogenesis"/>
    <property type="evidence" value="ECO:0007669"/>
    <property type="project" value="Ensembl"/>
</dbReference>
<dbReference type="GO" id="GO:0072112">
    <property type="term" value="P:podocyte differentiation"/>
    <property type="evidence" value="ECO:0007669"/>
    <property type="project" value="Ensembl"/>
</dbReference>
<dbReference type="GO" id="GO:0000271">
    <property type="term" value="P:polysaccharide biosynthetic process"/>
    <property type="evidence" value="ECO:0007669"/>
    <property type="project" value="Ensembl"/>
</dbReference>
<dbReference type="GO" id="GO:0030163">
    <property type="term" value="P:protein catabolic process"/>
    <property type="evidence" value="ECO:0007669"/>
    <property type="project" value="Ensembl"/>
</dbReference>
<dbReference type="GO" id="GO:0006486">
    <property type="term" value="P:protein glycosylation"/>
    <property type="evidence" value="ECO:0007669"/>
    <property type="project" value="UniProtKB-UniPathway"/>
</dbReference>
<dbReference type="GO" id="GO:0065003">
    <property type="term" value="P:protein-containing complex assembly"/>
    <property type="evidence" value="ECO:0007669"/>
    <property type="project" value="Ensembl"/>
</dbReference>
<dbReference type="GO" id="GO:0008217">
    <property type="term" value="P:regulation of blood pressure"/>
    <property type="evidence" value="ECO:0007669"/>
    <property type="project" value="Ensembl"/>
</dbReference>
<dbReference type="GO" id="GO:0010803">
    <property type="term" value="P:regulation of tumor necrosis factor-mediated signaling pathway"/>
    <property type="evidence" value="ECO:0007669"/>
    <property type="project" value="Ensembl"/>
</dbReference>
<dbReference type="GO" id="GO:0071503">
    <property type="term" value="P:response to heparin"/>
    <property type="evidence" value="ECO:0007669"/>
    <property type="project" value="Ensembl"/>
</dbReference>
<dbReference type="GO" id="GO:1990823">
    <property type="term" value="P:response to leukemia inhibitory factor"/>
    <property type="evidence" value="ECO:0007669"/>
    <property type="project" value="Ensembl"/>
</dbReference>
<dbReference type="GO" id="GO:0009642">
    <property type="term" value="P:response to light intensity"/>
    <property type="evidence" value="ECO:0007669"/>
    <property type="project" value="Ensembl"/>
</dbReference>
<dbReference type="GO" id="GO:0048733">
    <property type="term" value="P:sebaceous gland development"/>
    <property type="evidence" value="ECO:0007669"/>
    <property type="project" value="Ensembl"/>
</dbReference>
<dbReference type="GO" id="GO:0060506">
    <property type="term" value="P:smoothened signaling pathway involved in lung development"/>
    <property type="evidence" value="ECO:0007669"/>
    <property type="project" value="Ensembl"/>
</dbReference>
<dbReference type="GO" id="GO:0035176">
    <property type="term" value="P:social behavior"/>
    <property type="evidence" value="ECO:0007669"/>
    <property type="project" value="Ensembl"/>
</dbReference>
<dbReference type="GO" id="GO:0055078">
    <property type="term" value="P:sodium ion homeostasis"/>
    <property type="evidence" value="ECO:0007669"/>
    <property type="project" value="Ensembl"/>
</dbReference>
<dbReference type="GO" id="GO:0017145">
    <property type="term" value="P:stem cell division"/>
    <property type="evidence" value="ECO:0007669"/>
    <property type="project" value="Ensembl"/>
</dbReference>
<dbReference type="GO" id="GO:0062094">
    <property type="term" value="P:stomach development"/>
    <property type="evidence" value="ECO:0007669"/>
    <property type="project" value="Ensembl"/>
</dbReference>
<dbReference type="GO" id="GO:0051923">
    <property type="term" value="P:sulfation"/>
    <property type="evidence" value="ECO:0007669"/>
    <property type="project" value="Ensembl"/>
</dbReference>
<dbReference type="GO" id="GO:0060792">
    <property type="term" value="P:sweat gland development"/>
    <property type="evidence" value="ECO:0007669"/>
    <property type="project" value="Ensembl"/>
</dbReference>
<dbReference type="GO" id="GO:0035249">
    <property type="term" value="P:synaptic transmission, glutamatergic"/>
    <property type="evidence" value="ECO:0007669"/>
    <property type="project" value="Ensembl"/>
</dbReference>
<dbReference type="GO" id="GO:0120193">
    <property type="term" value="P:tight junction organization"/>
    <property type="evidence" value="ECO:0007669"/>
    <property type="project" value="Ensembl"/>
</dbReference>
<dbReference type="GO" id="GO:0007033">
    <property type="term" value="P:vacuole organization"/>
    <property type="evidence" value="ECO:0007669"/>
    <property type="project" value="Ensembl"/>
</dbReference>
<dbReference type="GO" id="GO:0042311">
    <property type="term" value="P:vasodilation"/>
    <property type="evidence" value="ECO:0007669"/>
    <property type="project" value="Ensembl"/>
</dbReference>
<dbReference type="GO" id="GO:0071625">
    <property type="term" value="P:vocalization behavior"/>
    <property type="evidence" value="ECO:0007669"/>
    <property type="project" value="Ensembl"/>
</dbReference>
<dbReference type="GO" id="GO:0042060">
    <property type="term" value="P:wound healing"/>
    <property type="evidence" value="ECO:0007669"/>
    <property type="project" value="Ensembl"/>
</dbReference>
<dbReference type="FunFam" id="3.90.550.10:FF:000034">
    <property type="entry name" value="Exostosin 1"/>
    <property type="match status" value="1"/>
</dbReference>
<dbReference type="Gene3D" id="3.90.550.10">
    <property type="entry name" value="Spore Coat Polysaccharide Biosynthesis Protein SpsA, Chain A"/>
    <property type="match status" value="1"/>
</dbReference>
<dbReference type="InterPro" id="IPR004263">
    <property type="entry name" value="Exostosin"/>
</dbReference>
<dbReference type="InterPro" id="IPR040911">
    <property type="entry name" value="Exostosin_GT47"/>
</dbReference>
<dbReference type="InterPro" id="IPR015338">
    <property type="entry name" value="GT64_dom"/>
</dbReference>
<dbReference type="InterPro" id="IPR029044">
    <property type="entry name" value="Nucleotide-diphossugar_trans"/>
</dbReference>
<dbReference type="PANTHER" id="PTHR48261">
    <property type="entry name" value="ACETYLGLUCOSAMINYLTRANSFERASE"/>
    <property type="match status" value="1"/>
</dbReference>
<dbReference type="PANTHER" id="PTHR48261:SF3">
    <property type="entry name" value="EXOSTOSIN GLYCOSYLTRANSFERASE 1"/>
    <property type="match status" value="1"/>
</dbReference>
<dbReference type="Pfam" id="PF03016">
    <property type="entry name" value="Exostosin_GT47"/>
    <property type="match status" value="1"/>
</dbReference>
<dbReference type="Pfam" id="PF09258">
    <property type="entry name" value="Glyco_transf_64"/>
    <property type="match status" value="1"/>
</dbReference>
<dbReference type="SUPFAM" id="SSF53448">
    <property type="entry name" value="Nucleotide-diphospho-sugar transferases"/>
    <property type="match status" value="1"/>
</dbReference>
<proteinExistence type="evidence at protein level"/>
<comment type="function">
    <text evidence="1">Glycosyltransferase forming with EXT2 the heterodimeric heparan sulfate polymerase which catalyzes the elongation of the heparan sulfate glycan backbone. Glycan backbone extension consists in the alternating transfer of (1-&gt;4)-beta-D-GlcA and (1-&gt;4)-alpha-D-GlcNAc residues from their respective UDP-sugar donors. Both EXT1 and EXT2 are required for the full activity of the polymerase since EXT1 bears the N-acetylglucosaminyl-proteoglycan 4-beta-glucuronosyltransferase activity within the complex while EXT2 carries the glucuronosyl-N-acetylglucosaminyl-proteoglycan 4-alpha-N-acetylglucosaminyltransferase activity. Heparan sulfate proteoglycans are ubiquitous components of the extracellular matrix and play an important role in tissue homeostasis and signaling.</text>
</comment>
<comment type="catalytic activity">
    <reaction evidence="1">
        <text>3-O-{alpha-D-GlcNAc-[(1-&gt;4)-beta-D-GlcA-(1-&gt;4)-alpha-D-GlcNAc](n)-(1-&gt;4)-beta-D-GlcA-(1-&gt;3)-beta-D-Gal-(1-&gt;3)-beta-D-Gal-(1-&gt;4)-beta-D-Xyl}-L-seryl-[protein] + UDP-alpha-D-glucuronate = 3-O-{[(1-&gt;4)-beta-D-GlcA-(1-&gt;4)-alpha-D-GlcNAc](n+1)-(1-&gt;4)-beta-D-GlcA-(1-&gt;3)-beta-D-Gal-(1-&gt;3)-beta-D-Gal-(1-&gt;4)-beta-D-Xyl}-L-seryl-[protein] + UDP + H(+)</text>
        <dbReference type="Rhea" id="RHEA:20908"/>
        <dbReference type="Rhea" id="RHEA-COMP:12623"/>
        <dbReference type="Rhea" id="RHEA-COMP:14295"/>
        <dbReference type="ChEBI" id="CHEBI:15378"/>
        <dbReference type="ChEBI" id="CHEBI:58052"/>
        <dbReference type="ChEBI" id="CHEBI:58223"/>
        <dbReference type="ChEBI" id="CHEBI:132415"/>
        <dbReference type="ChEBI" id="CHEBI:132416"/>
        <dbReference type="EC" id="2.4.1.225"/>
    </reaction>
    <physiologicalReaction direction="left-to-right" evidence="1">
        <dbReference type="Rhea" id="RHEA:20909"/>
    </physiologicalReaction>
</comment>
<comment type="pathway">
    <text evidence="1">Protein modification; protein glycosylation.</text>
</comment>
<comment type="subunit">
    <text evidence="1">Part of the heparan sulfate polymerase, a dimeric complex composed of EXT1 and EXT2. Could also form homooligomeric complexes. Interacts with NDST1.</text>
</comment>
<comment type="subcellular location">
    <subcellularLocation>
        <location evidence="1">Golgi apparatus membrane</location>
        <topology evidence="2">Single-pass type II membrane protein</topology>
    </subcellularLocation>
    <subcellularLocation>
        <location evidence="1">Golgi apparatus</location>
        <location evidence="1">cis-Golgi network membrane</location>
        <topology evidence="2">Single-pass type II membrane protein</topology>
    </subcellularLocation>
    <subcellularLocation>
        <location evidence="1">Endoplasmic reticulum membrane</location>
        <topology evidence="2">Single-pass type II membrane protein</topology>
    </subcellularLocation>
    <text evidence="1">The active heparan sulfate polymerase complex composed of EXT1 and EXT2 is localized to the Golgi apparatus. If both proteins are individually detected in the endoplasmic reticulum, the formation of the complex promotes their transport to the Golgi.</text>
</comment>
<comment type="PTM">
    <text evidence="1">N-glycosylated.</text>
</comment>
<comment type="similarity">
    <text evidence="5">Belongs to the glycosyltransferase 47 family.</text>
</comment>
<name>EXT1_CRIGR</name>
<reference key="1">
    <citation type="journal article" date="2000" name="J. Biol. Chem.">
        <title>Location of the glucuronosyltransferase domain in the heparan sulfate copolymerase EXT1 by analysis of Chinese hamster ovary cell mutants.</title>
        <authorList>
            <person name="Wei G."/>
            <person name="Bai X."/>
            <person name="Gabb M.M.G."/>
            <person name="Bame K.J."/>
            <person name="Koshy T.I."/>
            <person name="Spear P.G."/>
            <person name="Esko J.D."/>
        </authorList>
    </citation>
    <scope>NUCLEOTIDE SEQUENCE [MRNA]</scope>
    <scope>MUTAGENESIS OF GLY-268; CYS-298; ARG-341; SER-344; ARG-346 AND GLU-349</scope>
</reference>
<evidence type="ECO:0000250" key="1">
    <source>
        <dbReference type="UniProtKB" id="Q16394"/>
    </source>
</evidence>
<evidence type="ECO:0000255" key="2"/>
<evidence type="ECO:0000269" key="3">
    <source>
    </source>
</evidence>
<evidence type="ECO:0000303" key="4">
    <source>
    </source>
</evidence>
<evidence type="ECO:0000305" key="5"/>
<accession>Q9JK82</accession>
<gene>
    <name evidence="4" type="primary">EXT1</name>
</gene>